<comment type="function">
    <text evidence="2 4">Hydrolyzes inulin-type beta-(2,1)-fructans. Has low activity against beta-(2,6)-linked fructans. May play a role as a beta-(2,1)-trimmer during graminan biosynthesis.</text>
</comment>
<comment type="catalytic activity">
    <reaction evidence="4">
        <text>Hydrolysis of terminal, non-reducing (2-&gt;1)-linked beta-D-fructofuranose residues in fructans.</text>
        <dbReference type="EC" id="3.2.1.153"/>
    </reaction>
</comment>
<comment type="activity regulation">
    <text evidence="2">Inhibited by sucrose.</text>
</comment>
<comment type="tissue specificity">
    <text evidence="4">Detected in leaves, with maximum levels at the leaf tip.</text>
</comment>
<comment type="induction">
    <text evidence="4">In the first section of the leaf sheath expression decreases after 7 days of cold treatment. In the second section of the leaf sheath expression increases upon cold treatment. In the thrid section of the leaf sheath and the first section from the leaf blade expression increases in the first 4 days of cold treatment before returning to its original levels. In the leaf tip expression decreases after 2 days of cold treatment.</text>
</comment>
<comment type="similarity">
    <text evidence="3">Belongs to the glycosyl hydrolase 32 family.</text>
</comment>
<gene>
    <name evidence="5" type="primary">1-FEHa</name>
</gene>
<evidence type="ECO:0000250" key="1">
    <source>
        <dbReference type="UniProtKB" id="Q43866"/>
    </source>
</evidence>
<evidence type="ECO:0000250" key="2">
    <source>
        <dbReference type="UniProtKB" id="Q84PN8"/>
    </source>
</evidence>
<evidence type="ECO:0000255" key="3"/>
<evidence type="ECO:0000269" key="4">
    <source>
    </source>
</evidence>
<evidence type="ECO:0000303" key="5">
    <source>
    </source>
</evidence>
<evidence type="ECO:0000305" key="6"/>
<evidence type="ECO:0000312" key="7">
    <source>
        <dbReference type="EMBL" id="ACZ65470.1"/>
    </source>
</evidence>
<proteinExistence type="evidence at protein level"/>
<keyword id="KW-1015">Disulfide bond</keyword>
<keyword id="KW-0325">Glycoprotein</keyword>
<keyword id="KW-0326">Glycosidase</keyword>
<keyword id="KW-0378">Hydrolase</keyword>
<keyword id="KW-0732">Signal</keyword>
<organism>
    <name type="scientific">Bromus pictus</name>
    <name type="common">Patagonian grass</name>
    <dbReference type="NCBI Taxonomy" id="629273"/>
    <lineage>
        <taxon>Eukaryota</taxon>
        <taxon>Viridiplantae</taxon>
        <taxon>Streptophyta</taxon>
        <taxon>Embryophyta</taxon>
        <taxon>Tracheophyta</taxon>
        <taxon>Spermatophyta</taxon>
        <taxon>Magnoliopsida</taxon>
        <taxon>Liliopsida</taxon>
        <taxon>Poales</taxon>
        <taxon>Poaceae</taxon>
        <taxon>BOP clade</taxon>
        <taxon>Pooideae</taxon>
        <taxon>Triticodae</taxon>
        <taxon>Bromeae</taxon>
        <taxon>Bromus</taxon>
    </lineage>
</organism>
<reference evidence="6 7" key="1">
    <citation type="journal article" date="2009" name="Planta">
        <title>Cloning and functional characterization of a fructan 1-exohydrolase (1-FEH) in the cold tolerant Patagonian species Bromus pictus.</title>
        <authorList>
            <person name="Del Viso F."/>
            <person name="Puebla A.F."/>
            <person name="Hopp H.E."/>
            <person name="Heinz R.A."/>
        </authorList>
    </citation>
    <scope>NUCLEOTIDE SEQUENCE [MRNA]</scope>
    <scope>FUNCTION</scope>
    <scope>CATALYTIC ACTIVITY</scope>
    <scope>TISSUE SPECIFICITY</scope>
    <scope>INDUCTION</scope>
    <source>
        <tissue evidence="4">Leaf</tissue>
    </source>
</reference>
<sequence length="602" mass="67078">MAQAWAFLLLPVLLLSSYASHRLFPSYITGPLCGSTTTSSSSSSGVRSFLCSQQDSQTPSPASTMYKTAFHFQPAKNWINDPSGPMYFNGFYHEFYQYNLNGPTFGDIVWGHSVSTDLVNWIGLEPALVRDTPSDIDGCWTGSVTILPGGQPVIIYTGGDIEKHQAQNIAFPKNRSDPYLREWTKVINNPVLLPNEPGMNSIEFRDPTTGWIGPDGHWRMAVGAEWHGYSAALLYKSEDFLNWTMVDHPLYSHNGTNMWECPDFYAVLPGNNGGLDLSAAIPQGAKHALKMSVDSVDKYMIGVYDLERDAFVPDVVLDDHRLWLRIDYGTFYASKSFYDSKKGRRVIWGWSRETDSPSDDLEKGWAGLHTIPRTIWLDGDGKQLLQWPVDEIESLRTNEINHQGLELNKGDLFEIKGVDTFQADVEIDFELPSLDDAEPFDPSWLLDPEMHCGEAGASVQGGIGPFGLVILASNDMNEHTEVYFRVYKSQEKGMVLMCSDLRRSSLRPGLETPAYGGFFELDLAKEKKISLRTLIDRSAVESFGGGGRVCITSRVYPAVLADGGSAHMYAFNNGNAIVKVPQLRAWTMRKAQVNVEMGWSAI</sequence>
<feature type="signal peptide" evidence="3">
    <location>
        <begin position="1"/>
        <end position="19"/>
    </location>
</feature>
<feature type="chain" id="PRO_0000395556" description="Fructan 1-exohydrolase" evidence="3">
    <location>
        <begin position="20"/>
        <end position="602"/>
    </location>
</feature>
<feature type="active site" evidence="1">
    <location>
        <position position="81"/>
    </location>
</feature>
<feature type="glycosylation site" description="N-linked (GlcNAc...) asparagine" evidence="3">
    <location>
        <position position="174"/>
    </location>
</feature>
<feature type="glycosylation site" description="N-linked (GlcNAc...) asparagine" evidence="3">
    <location>
        <position position="242"/>
    </location>
</feature>
<feature type="glycosylation site" description="N-linked (GlcNAc...) asparagine" evidence="3">
    <location>
        <position position="254"/>
    </location>
</feature>
<feature type="disulfide bond" evidence="1">
    <location>
        <begin position="452"/>
        <end position="498"/>
    </location>
</feature>
<name>1FEH_BROPI</name>
<protein>
    <recommendedName>
        <fullName evidence="7">Fructan 1-exohydrolase</fullName>
        <ecNumber>3.2.1.153</ecNumber>
    </recommendedName>
</protein>
<dbReference type="EC" id="3.2.1.153"/>
<dbReference type="EMBL" id="GQ247882">
    <property type="protein sequence ID" value="ACZ65470.1"/>
    <property type="molecule type" value="mRNA"/>
</dbReference>
<dbReference type="SMR" id="D2IGW7"/>
<dbReference type="CAZy" id="GH32">
    <property type="family name" value="Glycoside Hydrolase Family 32"/>
</dbReference>
<dbReference type="GlyCosmos" id="D2IGW7">
    <property type="glycosylation" value="3 sites, No reported glycans"/>
</dbReference>
<dbReference type="BRENDA" id="3.2.1.153">
    <property type="organism ID" value="993"/>
</dbReference>
<dbReference type="GO" id="GO:0033948">
    <property type="term" value="F:fructan beta-(2,1)-fructosidase activity"/>
    <property type="evidence" value="ECO:0007669"/>
    <property type="project" value="UniProtKB-EC"/>
</dbReference>
<dbReference type="GO" id="GO:0005975">
    <property type="term" value="P:carbohydrate metabolic process"/>
    <property type="evidence" value="ECO:0007669"/>
    <property type="project" value="InterPro"/>
</dbReference>
<dbReference type="CDD" id="cd18624">
    <property type="entry name" value="GH32_Fruct1-like"/>
    <property type="match status" value="1"/>
</dbReference>
<dbReference type="FunFam" id="2.115.10.20:FF:000001">
    <property type="entry name" value="Beta-fructofuranosidase, insoluble isoenzyme CWINV1"/>
    <property type="match status" value="1"/>
</dbReference>
<dbReference type="FunFam" id="2.60.120.560:FF:000002">
    <property type="entry name" value="Beta-fructofuranosidase, insoluble isoenzyme CWINV1"/>
    <property type="match status" value="1"/>
</dbReference>
<dbReference type="Gene3D" id="2.60.120.560">
    <property type="entry name" value="Exo-inulinase, domain 1"/>
    <property type="match status" value="1"/>
</dbReference>
<dbReference type="Gene3D" id="2.115.10.20">
    <property type="entry name" value="Glycosyl hydrolase domain, family 43"/>
    <property type="match status" value="1"/>
</dbReference>
<dbReference type="InterPro" id="IPR013320">
    <property type="entry name" value="ConA-like_dom_sf"/>
</dbReference>
<dbReference type="InterPro" id="IPR050551">
    <property type="entry name" value="Fructan_Metab_Enzymes"/>
</dbReference>
<dbReference type="InterPro" id="IPR001362">
    <property type="entry name" value="Glyco_hydro_32"/>
</dbReference>
<dbReference type="InterPro" id="IPR013189">
    <property type="entry name" value="Glyco_hydro_32_C"/>
</dbReference>
<dbReference type="InterPro" id="IPR013148">
    <property type="entry name" value="Glyco_hydro_32_N"/>
</dbReference>
<dbReference type="InterPro" id="IPR023296">
    <property type="entry name" value="Glyco_hydro_beta-prop_sf"/>
</dbReference>
<dbReference type="PANTHER" id="PTHR31953">
    <property type="entry name" value="BETA-FRUCTOFURANOSIDASE, INSOLUBLE ISOENZYME CWINV1-RELATED"/>
    <property type="match status" value="1"/>
</dbReference>
<dbReference type="Pfam" id="PF08244">
    <property type="entry name" value="Glyco_hydro_32C"/>
    <property type="match status" value="1"/>
</dbReference>
<dbReference type="Pfam" id="PF00251">
    <property type="entry name" value="Glyco_hydro_32N"/>
    <property type="match status" value="1"/>
</dbReference>
<dbReference type="SMART" id="SM00640">
    <property type="entry name" value="Glyco_32"/>
    <property type="match status" value="1"/>
</dbReference>
<dbReference type="SUPFAM" id="SSF75005">
    <property type="entry name" value="Arabinanase/levansucrase/invertase"/>
    <property type="match status" value="1"/>
</dbReference>
<dbReference type="SUPFAM" id="SSF49899">
    <property type="entry name" value="Concanavalin A-like lectins/glucanases"/>
    <property type="match status" value="1"/>
</dbReference>
<accession>D2IGW7</accession>